<proteinExistence type="inferred from homology"/>
<feature type="chain" id="PRO_1000013301" description="Large ribosomal subunit protein bL34">
    <location>
        <begin position="1"/>
        <end position="44"/>
    </location>
</feature>
<keyword id="KW-0687">Ribonucleoprotein</keyword>
<keyword id="KW-0689">Ribosomal protein</keyword>
<evidence type="ECO:0000255" key="1">
    <source>
        <dbReference type="HAMAP-Rule" id="MF_00391"/>
    </source>
</evidence>
<evidence type="ECO:0000305" key="2"/>
<protein>
    <recommendedName>
        <fullName evidence="1">Large ribosomal subunit protein bL34</fullName>
    </recommendedName>
    <alternativeName>
        <fullName evidence="2">50S ribosomal protein L34</fullName>
    </alternativeName>
</protein>
<organism>
    <name type="scientific">Burkholderia lata (strain ATCC 17760 / DSM 23089 / LMG 22485 / NCIMB 9086 / R18194 / 383)</name>
    <dbReference type="NCBI Taxonomy" id="482957"/>
    <lineage>
        <taxon>Bacteria</taxon>
        <taxon>Pseudomonadati</taxon>
        <taxon>Pseudomonadota</taxon>
        <taxon>Betaproteobacteria</taxon>
        <taxon>Burkholderiales</taxon>
        <taxon>Burkholderiaceae</taxon>
        <taxon>Burkholderia</taxon>
        <taxon>Burkholderia cepacia complex</taxon>
    </lineage>
</organism>
<reference key="1">
    <citation type="submission" date="2005-10" db="EMBL/GenBank/DDBJ databases">
        <title>Complete sequence of chromosome 1 of Burkholderia sp. 383.</title>
        <authorList>
            <consortium name="US DOE Joint Genome Institute"/>
            <person name="Copeland A."/>
            <person name="Lucas S."/>
            <person name="Lapidus A."/>
            <person name="Barry K."/>
            <person name="Detter J.C."/>
            <person name="Glavina T."/>
            <person name="Hammon N."/>
            <person name="Israni S."/>
            <person name="Pitluck S."/>
            <person name="Chain P."/>
            <person name="Malfatti S."/>
            <person name="Shin M."/>
            <person name="Vergez L."/>
            <person name="Schmutz J."/>
            <person name="Larimer F."/>
            <person name="Land M."/>
            <person name="Kyrpides N."/>
            <person name="Lykidis A."/>
            <person name="Richardson P."/>
        </authorList>
    </citation>
    <scope>NUCLEOTIDE SEQUENCE [LARGE SCALE GENOMIC DNA]</scope>
    <source>
        <strain>ATCC 17760 / DSM 23089 / LMG 22485 / NCIMB 9086 / R18194 / 383</strain>
    </source>
</reference>
<sequence length="44" mass="5195">MKRTYQPSVTRRKRTHGFRVRMKTAGGRKVINARRAKGRKRLAI</sequence>
<name>RL34_BURL3</name>
<comment type="similarity">
    <text evidence="1">Belongs to the bacterial ribosomal protein bL34 family.</text>
</comment>
<accession>Q39BP9</accession>
<dbReference type="EMBL" id="CP000151">
    <property type="protein sequence ID" value="ABB10117.1"/>
    <property type="molecule type" value="Genomic_DNA"/>
</dbReference>
<dbReference type="RefSeq" id="WP_004198824.1">
    <property type="nucleotide sequence ID" value="NZ_WNDV01000015.1"/>
</dbReference>
<dbReference type="SMR" id="Q39BP9"/>
<dbReference type="GeneID" id="98107775"/>
<dbReference type="KEGG" id="bur:Bcep18194_A6523"/>
<dbReference type="HOGENOM" id="CLU_129938_2_0_4"/>
<dbReference type="Proteomes" id="UP000002705">
    <property type="component" value="Chromosome 1"/>
</dbReference>
<dbReference type="GO" id="GO:1990904">
    <property type="term" value="C:ribonucleoprotein complex"/>
    <property type="evidence" value="ECO:0007669"/>
    <property type="project" value="UniProtKB-KW"/>
</dbReference>
<dbReference type="GO" id="GO:0005840">
    <property type="term" value="C:ribosome"/>
    <property type="evidence" value="ECO:0007669"/>
    <property type="project" value="UniProtKB-KW"/>
</dbReference>
<dbReference type="GO" id="GO:0003735">
    <property type="term" value="F:structural constituent of ribosome"/>
    <property type="evidence" value="ECO:0007669"/>
    <property type="project" value="InterPro"/>
</dbReference>
<dbReference type="GO" id="GO:0006412">
    <property type="term" value="P:translation"/>
    <property type="evidence" value="ECO:0007669"/>
    <property type="project" value="UniProtKB-UniRule"/>
</dbReference>
<dbReference type="FunFam" id="1.10.287.3980:FF:000001">
    <property type="entry name" value="Mitochondrial ribosomal protein L34"/>
    <property type="match status" value="1"/>
</dbReference>
<dbReference type="Gene3D" id="1.10.287.3980">
    <property type="match status" value="1"/>
</dbReference>
<dbReference type="HAMAP" id="MF_00391">
    <property type="entry name" value="Ribosomal_bL34"/>
    <property type="match status" value="1"/>
</dbReference>
<dbReference type="InterPro" id="IPR000271">
    <property type="entry name" value="Ribosomal_bL34"/>
</dbReference>
<dbReference type="InterPro" id="IPR020939">
    <property type="entry name" value="Ribosomal_bL34_CS"/>
</dbReference>
<dbReference type="NCBIfam" id="TIGR01030">
    <property type="entry name" value="rpmH_bact"/>
    <property type="match status" value="1"/>
</dbReference>
<dbReference type="PANTHER" id="PTHR14503:SF4">
    <property type="entry name" value="LARGE RIBOSOMAL SUBUNIT PROTEIN BL34M"/>
    <property type="match status" value="1"/>
</dbReference>
<dbReference type="PANTHER" id="PTHR14503">
    <property type="entry name" value="MITOCHONDRIAL RIBOSOMAL PROTEIN 34 FAMILY MEMBER"/>
    <property type="match status" value="1"/>
</dbReference>
<dbReference type="Pfam" id="PF00468">
    <property type="entry name" value="Ribosomal_L34"/>
    <property type="match status" value="1"/>
</dbReference>
<dbReference type="PROSITE" id="PS00784">
    <property type="entry name" value="RIBOSOMAL_L34"/>
    <property type="match status" value="1"/>
</dbReference>
<gene>
    <name evidence="1" type="primary">rpmH</name>
    <name type="ordered locus">Bcep18194_A6523</name>
</gene>